<name>GVPA_SYNJB</name>
<proteinExistence type="inferred from homology"/>
<evidence type="ECO:0000255" key="1">
    <source>
        <dbReference type="HAMAP-Rule" id="MF_00576"/>
    </source>
</evidence>
<evidence type="ECO:0000303" key="2">
    <source>
    </source>
</evidence>
<protein>
    <recommendedName>
        <fullName evidence="1">Gas vesicle protein A</fullName>
        <shortName evidence="1">GvpA</shortName>
    </recommendedName>
</protein>
<dbReference type="EMBL" id="CP000240">
    <property type="protein sequence ID" value="ABD02788.1"/>
    <property type="molecule type" value="Genomic_DNA"/>
</dbReference>
<dbReference type="RefSeq" id="WP_011429717.1">
    <property type="nucleotide sequence ID" value="NC_007776.1"/>
</dbReference>
<dbReference type="SMR" id="Q2JKK1"/>
<dbReference type="STRING" id="321332.CYB_1833"/>
<dbReference type="KEGG" id="cyb:CYB_1833"/>
<dbReference type="eggNOG" id="ENOG5032YMQ">
    <property type="taxonomic scope" value="Bacteria"/>
</dbReference>
<dbReference type="HOGENOM" id="CLU_169045_1_0_3"/>
<dbReference type="OrthoDB" id="284387at2"/>
<dbReference type="Proteomes" id="UP000001938">
    <property type="component" value="Chromosome"/>
</dbReference>
<dbReference type="GO" id="GO:0033172">
    <property type="term" value="C:gas vesicle shell"/>
    <property type="evidence" value="ECO:0007669"/>
    <property type="project" value="UniProtKB-UniRule"/>
</dbReference>
<dbReference type="GO" id="GO:0012506">
    <property type="term" value="C:vesicle membrane"/>
    <property type="evidence" value="ECO:0007669"/>
    <property type="project" value="InterPro"/>
</dbReference>
<dbReference type="GO" id="GO:0005198">
    <property type="term" value="F:structural molecule activity"/>
    <property type="evidence" value="ECO:0007669"/>
    <property type="project" value="InterPro"/>
</dbReference>
<dbReference type="HAMAP" id="MF_00576">
    <property type="entry name" value="Gas_vesicle_A"/>
    <property type="match status" value="1"/>
</dbReference>
<dbReference type="InterPro" id="IPR000638">
    <property type="entry name" value="Gas-vesicle_GvpA-like"/>
</dbReference>
<dbReference type="InterPro" id="IPR047870">
    <property type="entry name" value="Gas_vesicle_GvpA"/>
</dbReference>
<dbReference type="InterPro" id="IPR050530">
    <property type="entry name" value="GvpA"/>
</dbReference>
<dbReference type="InterPro" id="IPR018493">
    <property type="entry name" value="GvpA-like_CS"/>
</dbReference>
<dbReference type="NCBIfam" id="NF006874">
    <property type="entry name" value="PRK09371.1"/>
    <property type="match status" value="1"/>
</dbReference>
<dbReference type="PANTHER" id="PTHR35344:SF4">
    <property type="entry name" value="GAS VESICLE PROTEIN A1"/>
    <property type="match status" value="1"/>
</dbReference>
<dbReference type="PANTHER" id="PTHR35344">
    <property type="entry name" value="GAS VESICLE STRUCTURAL PROTEIN 2-RELATED"/>
    <property type="match status" value="1"/>
</dbReference>
<dbReference type="Pfam" id="PF00741">
    <property type="entry name" value="Gas_vesicle"/>
    <property type="match status" value="1"/>
</dbReference>
<dbReference type="PROSITE" id="PS00234">
    <property type="entry name" value="GAS_VESICLE_A_1"/>
    <property type="match status" value="1"/>
</dbReference>
<dbReference type="PROSITE" id="PS00669">
    <property type="entry name" value="GAS_VESICLE_A_2"/>
    <property type="match status" value="1"/>
</dbReference>
<organism>
    <name type="scientific">Synechococcus sp. (strain JA-2-3B'a(2-13))</name>
    <name type="common">Cyanobacteria bacterium Yellowstone B-Prime</name>
    <dbReference type="NCBI Taxonomy" id="321332"/>
    <lineage>
        <taxon>Bacteria</taxon>
        <taxon>Bacillati</taxon>
        <taxon>Cyanobacteriota</taxon>
        <taxon>Cyanophyceae</taxon>
        <taxon>Synechococcales</taxon>
        <taxon>Synechococcaceae</taxon>
        <taxon>Synechococcus</taxon>
    </lineage>
</organism>
<keyword id="KW-0304">Gas vesicle</keyword>
<keyword id="KW-1185">Reference proteome</keyword>
<comment type="function">
    <text evidence="1">Gas vesicles are hollow, gas filled proteinaceous nanostructures found in some microorganisms. During planktonic growth they allow positioning of the organism at a favorable depth for light or nutrient acquisition. GvpA forms the protein shell.</text>
</comment>
<comment type="subunit">
    <text evidence="1">The gas vesicle shell is 2 nm thick and consists of a single layer of this protein. It forms helical ribs nearly perpendicular to the long axis of the vesicle.</text>
</comment>
<comment type="subcellular location">
    <subcellularLocation>
        <location evidence="1">Gas vesicle shell</location>
    </subcellularLocation>
</comment>
<comment type="similarity">
    <text evidence="1">Belongs to the gas vesicle GvpA family.</text>
</comment>
<gene>
    <name evidence="1 2" type="primary">gvpA</name>
    <name type="ordered locus">CYB_1833</name>
</gene>
<sequence>MAVEKVNSSSSLAEVIDRILDKGIVVDAWVRVSLVGIELLAIEARVVVASVETYLKYAEAVGLTATAAAPAV</sequence>
<feature type="chain" id="PRO_1000025113" description="Gas vesicle protein A">
    <location>
        <begin position="1"/>
        <end position="72"/>
    </location>
</feature>
<accession>Q2JKK1</accession>
<reference key="1">
    <citation type="journal article" date="2007" name="ISME J.">
        <title>Population level functional diversity in a microbial community revealed by comparative genomic and metagenomic analyses.</title>
        <authorList>
            <person name="Bhaya D."/>
            <person name="Grossman A.R."/>
            <person name="Steunou A.-S."/>
            <person name="Khuri N."/>
            <person name="Cohan F.M."/>
            <person name="Hamamura N."/>
            <person name="Melendrez M.C."/>
            <person name="Bateson M.M."/>
            <person name="Ward D.M."/>
            <person name="Heidelberg J.F."/>
        </authorList>
    </citation>
    <scope>NUCLEOTIDE SEQUENCE [LARGE SCALE GENOMIC DNA]</scope>
    <source>
        <strain>JA-2-3B'a(2-13)</strain>
    </source>
</reference>